<evidence type="ECO:0000250" key="1">
    <source>
        <dbReference type="UniProtKB" id="O84395"/>
    </source>
</evidence>
<evidence type="ECO:0000269" key="2">
    <source>
    </source>
</evidence>
<evidence type="ECO:0000269" key="3">
    <source>
    </source>
</evidence>
<evidence type="ECO:0000269" key="4">
    <source>
    </source>
</evidence>
<evidence type="ECO:0000303" key="5">
    <source>
    </source>
</evidence>
<evidence type="ECO:0000303" key="6">
    <source>
    </source>
</evidence>
<evidence type="ECO:0000303" key="7">
    <source>
    </source>
</evidence>
<evidence type="ECO:0000305" key="8"/>
<evidence type="ECO:0000305" key="9">
    <source>
    </source>
</evidence>
<evidence type="ECO:0000305" key="10">
    <source>
    </source>
</evidence>
<organism>
    <name type="scientific">Bacillus subtilis (strain 168)</name>
    <dbReference type="NCBI Taxonomy" id="224308"/>
    <lineage>
        <taxon>Bacteria</taxon>
        <taxon>Bacillati</taxon>
        <taxon>Bacillota</taxon>
        <taxon>Bacilli</taxon>
        <taxon>Bacillales</taxon>
        <taxon>Bacillaceae</taxon>
        <taxon>Bacillus</taxon>
    </lineage>
</organism>
<accession>O31665</accession>
<reference key="1">
    <citation type="journal article" date="1997" name="Nature">
        <title>The complete genome sequence of the Gram-positive bacterium Bacillus subtilis.</title>
        <authorList>
            <person name="Kunst F."/>
            <person name="Ogasawara N."/>
            <person name="Moszer I."/>
            <person name="Albertini A.M."/>
            <person name="Alloni G."/>
            <person name="Azevedo V."/>
            <person name="Bertero M.G."/>
            <person name="Bessieres P."/>
            <person name="Bolotin A."/>
            <person name="Borchert S."/>
            <person name="Borriss R."/>
            <person name="Boursier L."/>
            <person name="Brans A."/>
            <person name="Braun M."/>
            <person name="Brignell S.C."/>
            <person name="Bron S."/>
            <person name="Brouillet S."/>
            <person name="Bruschi C.V."/>
            <person name="Caldwell B."/>
            <person name="Capuano V."/>
            <person name="Carter N.M."/>
            <person name="Choi S.-K."/>
            <person name="Codani J.-J."/>
            <person name="Connerton I.F."/>
            <person name="Cummings N.J."/>
            <person name="Daniel R.A."/>
            <person name="Denizot F."/>
            <person name="Devine K.M."/>
            <person name="Duesterhoeft A."/>
            <person name="Ehrlich S.D."/>
            <person name="Emmerson P.T."/>
            <person name="Entian K.-D."/>
            <person name="Errington J."/>
            <person name="Fabret C."/>
            <person name="Ferrari E."/>
            <person name="Foulger D."/>
            <person name="Fritz C."/>
            <person name="Fujita M."/>
            <person name="Fujita Y."/>
            <person name="Fuma S."/>
            <person name="Galizzi A."/>
            <person name="Galleron N."/>
            <person name="Ghim S.-Y."/>
            <person name="Glaser P."/>
            <person name="Goffeau A."/>
            <person name="Golightly E.J."/>
            <person name="Grandi G."/>
            <person name="Guiseppi G."/>
            <person name="Guy B.J."/>
            <person name="Haga K."/>
            <person name="Haiech J."/>
            <person name="Harwood C.R."/>
            <person name="Henaut A."/>
            <person name="Hilbert H."/>
            <person name="Holsappel S."/>
            <person name="Hosono S."/>
            <person name="Hullo M.-F."/>
            <person name="Itaya M."/>
            <person name="Jones L.-M."/>
            <person name="Joris B."/>
            <person name="Karamata D."/>
            <person name="Kasahara Y."/>
            <person name="Klaerr-Blanchard M."/>
            <person name="Klein C."/>
            <person name="Kobayashi Y."/>
            <person name="Koetter P."/>
            <person name="Koningstein G."/>
            <person name="Krogh S."/>
            <person name="Kumano M."/>
            <person name="Kurita K."/>
            <person name="Lapidus A."/>
            <person name="Lardinois S."/>
            <person name="Lauber J."/>
            <person name="Lazarevic V."/>
            <person name="Lee S.-M."/>
            <person name="Levine A."/>
            <person name="Liu H."/>
            <person name="Masuda S."/>
            <person name="Mauel C."/>
            <person name="Medigue C."/>
            <person name="Medina N."/>
            <person name="Mellado R.P."/>
            <person name="Mizuno M."/>
            <person name="Moestl D."/>
            <person name="Nakai S."/>
            <person name="Noback M."/>
            <person name="Noone D."/>
            <person name="O'Reilly M."/>
            <person name="Ogawa K."/>
            <person name="Ogiwara A."/>
            <person name="Oudega B."/>
            <person name="Park S.-H."/>
            <person name="Parro V."/>
            <person name="Pohl T.M."/>
            <person name="Portetelle D."/>
            <person name="Porwollik S."/>
            <person name="Prescott A.M."/>
            <person name="Presecan E."/>
            <person name="Pujic P."/>
            <person name="Purnelle B."/>
            <person name="Rapoport G."/>
            <person name="Rey M."/>
            <person name="Reynolds S."/>
            <person name="Rieger M."/>
            <person name="Rivolta C."/>
            <person name="Rocha E."/>
            <person name="Roche B."/>
            <person name="Rose M."/>
            <person name="Sadaie Y."/>
            <person name="Sato T."/>
            <person name="Scanlan E."/>
            <person name="Schleich S."/>
            <person name="Schroeter R."/>
            <person name="Scoffone F."/>
            <person name="Sekiguchi J."/>
            <person name="Sekowska A."/>
            <person name="Seror S.J."/>
            <person name="Serror P."/>
            <person name="Shin B.-S."/>
            <person name="Soldo B."/>
            <person name="Sorokin A."/>
            <person name="Tacconi E."/>
            <person name="Takagi T."/>
            <person name="Takahashi H."/>
            <person name="Takemaru K."/>
            <person name="Takeuchi M."/>
            <person name="Tamakoshi A."/>
            <person name="Tanaka T."/>
            <person name="Terpstra P."/>
            <person name="Tognoni A."/>
            <person name="Tosato V."/>
            <person name="Uchiyama S."/>
            <person name="Vandenbol M."/>
            <person name="Vannier F."/>
            <person name="Vassarotti A."/>
            <person name="Viari A."/>
            <person name="Wambutt R."/>
            <person name="Wedler E."/>
            <person name="Wedler H."/>
            <person name="Weitzenegger T."/>
            <person name="Winters P."/>
            <person name="Wipat A."/>
            <person name="Yamamoto H."/>
            <person name="Yamane K."/>
            <person name="Yasumoto K."/>
            <person name="Yata K."/>
            <person name="Yoshida K."/>
            <person name="Yoshikawa H.-F."/>
            <person name="Zumstein E."/>
            <person name="Yoshikawa H."/>
            <person name="Danchin A."/>
        </authorList>
    </citation>
    <scope>NUCLEOTIDE SEQUENCE [LARGE SCALE GENOMIC DNA]</scope>
    <source>
        <strain>168</strain>
    </source>
</reference>
<reference key="2">
    <citation type="journal article" date="2002" name="BMC Microbiol.">
        <title>The methionine salvage pathway in Bacillus subtilis.</title>
        <authorList>
            <person name="Sekowska A."/>
            <person name="Danchin A."/>
        </authorList>
    </citation>
    <scope>FUNCTION</scope>
    <scope>REVIEW</scope>
</reference>
<reference key="3">
    <citation type="journal article" date="2003" name="J. Bacteriol.">
        <title>Methionine regeneration and aminotransferases in Bacillus subtilis, Bacillus cereus, and Bacillus anthracis.</title>
        <authorList>
            <person name="Berger B.J."/>
            <person name="English S."/>
            <person name="Chan G."/>
            <person name="Knodel M.H."/>
        </authorList>
    </citation>
    <scope>FUNCTION</scope>
    <scope>CATALYTIC ACTIVITY</scope>
</reference>
<reference key="4">
    <citation type="journal article" date="2004" name="BMC Microbiol.">
        <title>Bacterial variations on the methionine salvage pathway.</title>
        <authorList>
            <person name="Sekowska A."/>
            <person name="Denervaud V."/>
            <person name="Ashida H."/>
            <person name="Michoud K."/>
            <person name="Haas D."/>
            <person name="Yokota A."/>
            <person name="Danchin A."/>
        </authorList>
    </citation>
    <scope>PATHWAY</scope>
    <scope>NOMENCLATURE</scope>
</reference>
<reference key="5">
    <citation type="journal article" date="2015" name="Phytochemistry">
        <title>Evidence that glutamine transaminase and omega-amidase potentially act in tandem to close the methionine salvage cycle in bacteria and plants.</title>
        <authorList>
            <person name="Ellens K.W."/>
            <person name="Richardson L.G."/>
            <person name="Frelin O."/>
            <person name="Collins J."/>
            <person name="Ribeiro C.L."/>
            <person name="Hsieh Y.F."/>
            <person name="Mullen R.T."/>
            <person name="Hanson A.D."/>
        </authorList>
    </citation>
    <scope>FUNCTION</scope>
    <scope>CATALYTIC ACTIVITY</scope>
    <scope>BIOPHYSICOCHEMICAL PROPERTIES</scope>
    <scope>PATHWAY</scope>
    <scope>DISRUPTION PHENOTYPE</scope>
</reference>
<keyword id="KW-0028">Amino-acid biosynthesis</keyword>
<keyword id="KW-0032">Aminotransferase</keyword>
<keyword id="KW-0486">Methionine biosynthesis</keyword>
<keyword id="KW-0663">Pyridoxal phosphate</keyword>
<keyword id="KW-1185">Reference proteome</keyword>
<keyword id="KW-0808">Transferase</keyword>
<comment type="function">
    <text evidence="2 3 4">Involved in the methylthioribose (MTR) recycling pathway (PubMed:12022921, PubMed:24837359). Catalyzes the formation of methionine from 2-keto-4-methylthiobutyrate (KMTB) (PubMed:12670965, PubMed:24837359).</text>
</comment>
<comment type="catalytic activity">
    <reaction evidence="3 4">
        <text>4-methylsulfanyl-2-oxobutanoate + L-glutamine = 2-oxoglutaramate + L-methionine</text>
        <dbReference type="Rhea" id="RHEA:30391"/>
        <dbReference type="ChEBI" id="CHEBI:16723"/>
        <dbReference type="ChEBI" id="CHEBI:16769"/>
        <dbReference type="ChEBI" id="CHEBI:57844"/>
        <dbReference type="ChEBI" id="CHEBI:58359"/>
        <dbReference type="EC" id="2.6.1.117"/>
    </reaction>
</comment>
<comment type="cofactor">
    <cofactor evidence="1">
        <name>pyridoxal 5'-phosphate</name>
        <dbReference type="ChEBI" id="CHEBI:597326"/>
    </cofactor>
</comment>
<comment type="biophysicochemical properties">
    <kinetics>
        <KM evidence="4">1.91 mM for KMTB</KM>
        <text evidence="4">kcat is 2.32 sec(-1).</text>
    </kinetics>
</comment>
<comment type="pathway">
    <text evidence="9 10">Amino-acid biosynthesis; L-methionine biosynthesis via salvage pathway; L-methionine from S-methyl-5-thio-alpha-D-ribose 1-phosphate: step 6/6.</text>
</comment>
<comment type="disruption phenotype">
    <text evidence="4">Disruption mutant grows more slowly than the wild type strain on methylthioribose (MTR) as the sulfur source.</text>
</comment>
<comment type="similarity">
    <text evidence="8">Belongs to the class-I pyridoxal-phosphate-dependent aminotransferase family. MtnE subfamily.</text>
</comment>
<dbReference type="EC" id="2.6.1.117" evidence="3 4"/>
<dbReference type="EMBL" id="AL009126">
    <property type="protein sequence ID" value="CAB13231.1"/>
    <property type="molecule type" value="Genomic_DNA"/>
</dbReference>
<dbReference type="PIR" id="F69863">
    <property type="entry name" value="F69863"/>
</dbReference>
<dbReference type="RefSeq" id="NP_389241.1">
    <property type="nucleotide sequence ID" value="NC_000964.3"/>
</dbReference>
<dbReference type="RefSeq" id="WP_003244774.1">
    <property type="nucleotide sequence ID" value="NZ_OZ025638.1"/>
</dbReference>
<dbReference type="SMR" id="O31665"/>
<dbReference type="FunCoup" id="O31665">
    <property type="interactions" value="142"/>
</dbReference>
<dbReference type="STRING" id="224308.BSU13580"/>
<dbReference type="PaxDb" id="224308-BSU13580"/>
<dbReference type="EnsemblBacteria" id="CAB13231">
    <property type="protein sequence ID" value="CAB13231"/>
    <property type="gene ID" value="BSU_13580"/>
</dbReference>
<dbReference type="GeneID" id="939330"/>
<dbReference type="KEGG" id="bsu:BSU13580"/>
<dbReference type="PATRIC" id="fig|224308.179.peg.1475"/>
<dbReference type="eggNOG" id="COG0436">
    <property type="taxonomic scope" value="Bacteria"/>
</dbReference>
<dbReference type="InParanoid" id="O31665"/>
<dbReference type="OrthoDB" id="9802328at2"/>
<dbReference type="PhylomeDB" id="O31665"/>
<dbReference type="BioCyc" id="BSUB:BSU13580-MONOMER"/>
<dbReference type="BioCyc" id="MetaCyc:BSU13580-MONOMER"/>
<dbReference type="BRENDA" id="2.6.1.117">
    <property type="organism ID" value="658"/>
</dbReference>
<dbReference type="UniPathway" id="UPA00904">
    <property type="reaction ID" value="UER00879"/>
</dbReference>
<dbReference type="Proteomes" id="UP000001570">
    <property type="component" value="Chromosome"/>
</dbReference>
<dbReference type="GO" id="GO:0030170">
    <property type="term" value="F:pyridoxal phosphate binding"/>
    <property type="evidence" value="ECO:0007669"/>
    <property type="project" value="InterPro"/>
</dbReference>
<dbReference type="GO" id="GO:0008483">
    <property type="term" value="F:transaminase activity"/>
    <property type="evidence" value="ECO:0007669"/>
    <property type="project" value="UniProtKB-KW"/>
</dbReference>
<dbReference type="GO" id="GO:0019509">
    <property type="term" value="P:L-methionine salvage from methylthioadenosine"/>
    <property type="evidence" value="ECO:0007669"/>
    <property type="project" value="UniProtKB-UniPathway"/>
</dbReference>
<dbReference type="CDD" id="cd00609">
    <property type="entry name" value="AAT_like"/>
    <property type="match status" value="1"/>
</dbReference>
<dbReference type="Gene3D" id="3.90.1150.10">
    <property type="entry name" value="Aspartate Aminotransferase, domain 1"/>
    <property type="match status" value="1"/>
</dbReference>
<dbReference type="Gene3D" id="3.40.640.10">
    <property type="entry name" value="Type I PLP-dependent aspartate aminotransferase-like (Major domain)"/>
    <property type="match status" value="1"/>
</dbReference>
<dbReference type="InterPro" id="IPR004839">
    <property type="entry name" value="Aminotransferase_I/II_large"/>
</dbReference>
<dbReference type="InterPro" id="IPR050881">
    <property type="entry name" value="LL-DAP_aminotransferase"/>
</dbReference>
<dbReference type="InterPro" id="IPR015424">
    <property type="entry name" value="PyrdxlP-dep_Trfase"/>
</dbReference>
<dbReference type="InterPro" id="IPR015421">
    <property type="entry name" value="PyrdxlP-dep_Trfase_major"/>
</dbReference>
<dbReference type="InterPro" id="IPR015422">
    <property type="entry name" value="PyrdxlP-dep_Trfase_small"/>
</dbReference>
<dbReference type="NCBIfam" id="NF005977">
    <property type="entry name" value="PRK08068.1"/>
    <property type="match status" value="1"/>
</dbReference>
<dbReference type="PANTHER" id="PTHR42832">
    <property type="entry name" value="AMINO ACID AMINOTRANSFERASE"/>
    <property type="match status" value="1"/>
</dbReference>
<dbReference type="PANTHER" id="PTHR42832:SF3">
    <property type="entry name" value="L-GLUTAMINE--4-(METHYLSULFANYL)-2-OXOBUTANOATE AMINOTRANSFERASE"/>
    <property type="match status" value="1"/>
</dbReference>
<dbReference type="Pfam" id="PF00155">
    <property type="entry name" value="Aminotran_1_2"/>
    <property type="match status" value="1"/>
</dbReference>
<dbReference type="SUPFAM" id="SSF53383">
    <property type="entry name" value="PLP-dependent transferases"/>
    <property type="match status" value="1"/>
</dbReference>
<name>MTNE_BACSU</name>
<protein>
    <recommendedName>
        <fullName evidence="8">L-glutamine--4-(methylsulfanyl)-2-oxobutanoate aminotransferase</fullName>
        <ecNumber evidence="3 4">2.6.1.117</ecNumber>
    </recommendedName>
    <alternativeName>
        <fullName evidence="7">GTK</fullName>
    </alternativeName>
    <alternativeName>
        <fullName evidence="8">Glutamine transaminase MtnE</fullName>
    </alternativeName>
</protein>
<gene>
    <name evidence="6" type="primary">mtnE</name>
    <name evidence="5" type="synonym">mtnV</name>
    <name type="synonym">ykrV</name>
    <name type="ordered locus">BSU13580</name>
</gene>
<sequence length="398" mass="44043">MKFEQSHVLKELPKQFFASLVQKVNRKLAEGHDVINLGQGNPDQPTPEHIVEEMKRAVADPENHKYSSFRGSYRLKSAAAAFYKREYGIDLDPETEVAVLFGGKAGLVELPQCLLNPGDTILVPDPGYPDYWSGVTLAKAKMEMMPLVKDRAFLPDYSSITAEIREQAKLMYLNYPNNPTGAVATSEFFEDTVRFAAENGICVVHDFAYGAVGFDGCKPLSFLQTEGAKDIGIEIYTLSKTYNMAGWRVGFAVGNASVIEAINLYQDHMFVSLFRATQEAAAEALLADQTCVAEQNARYESRRNAWITACREIGWDVTAPAGSFFAWLPVPEGYTSEQFSDLLLEKANVAVAAGNGFGEYGEGYVRVGLLTSEERLKEAAYRIGKLNLFTQKSIDKTL</sequence>
<proteinExistence type="evidence at protein level"/>
<feature type="chain" id="PRO_0000123924" description="L-glutamine--4-(methylsulfanyl)-2-oxobutanoate aminotransferase">
    <location>
        <begin position="1"/>
        <end position="398"/>
    </location>
</feature>
<feature type="modified residue" description="N6-(pyridoxal phosphate)lysine" evidence="1">
    <location>
        <position position="240"/>
    </location>
</feature>